<organism>
    <name type="scientific">Burkholderia pseudomallei (strain 668)</name>
    <dbReference type="NCBI Taxonomy" id="320373"/>
    <lineage>
        <taxon>Bacteria</taxon>
        <taxon>Pseudomonadati</taxon>
        <taxon>Pseudomonadota</taxon>
        <taxon>Betaproteobacteria</taxon>
        <taxon>Burkholderiales</taxon>
        <taxon>Burkholderiaceae</taxon>
        <taxon>Burkholderia</taxon>
        <taxon>pseudomallei group</taxon>
    </lineage>
</organism>
<feature type="chain" id="PRO_1000051026" description="Small ribosomal subunit protein uS19">
    <location>
        <begin position="1"/>
        <end position="91"/>
    </location>
</feature>
<comment type="function">
    <text evidence="1">Protein S19 forms a complex with S13 that binds strongly to the 16S ribosomal RNA.</text>
</comment>
<comment type="similarity">
    <text evidence="1">Belongs to the universal ribosomal protein uS19 family.</text>
</comment>
<sequence length="91" mass="10108">MARSVKKGPFCDAHLLKKVEAAAASRDKKPIKTWSRRSTILPDFIGLTIAVHNGRQHVPVYISENMVGHKLGEFALTRTFKGHAADKKAKK</sequence>
<dbReference type="EMBL" id="CP000570">
    <property type="protein sequence ID" value="ABN84046.1"/>
    <property type="molecule type" value="Genomic_DNA"/>
</dbReference>
<dbReference type="RefSeq" id="WP_004199273.1">
    <property type="nucleotide sequence ID" value="NC_009074.1"/>
</dbReference>
<dbReference type="SMR" id="A3NEH5"/>
<dbReference type="GeneID" id="98107156"/>
<dbReference type="KEGG" id="bpd:BURPS668_3742"/>
<dbReference type="HOGENOM" id="CLU_144911_0_1_4"/>
<dbReference type="GO" id="GO:0005737">
    <property type="term" value="C:cytoplasm"/>
    <property type="evidence" value="ECO:0007669"/>
    <property type="project" value="UniProtKB-ARBA"/>
</dbReference>
<dbReference type="GO" id="GO:0015935">
    <property type="term" value="C:small ribosomal subunit"/>
    <property type="evidence" value="ECO:0007669"/>
    <property type="project" value="InterPro"/>
</dbReference>
<dbReference type="GO" id="GO:0019843">
    <property type="term" value="F:rRNA binding"/>
    <property type="evidence" value="ECO:0007669"/>
    <property type="project" value="UniProtKB-UniRule"/>
</dbReference>
<dbReference type="GO" id="GO:0003735">
    <property type="term" value="F:structural constituent of ribosome"/>
    <property type="evidence" value="ECO:0007669"/>
    <property type="project" value="InterPro"/>
</dbReference>
<dbReference type="GO" id="GO:0000028">
    <property type="term" value="P:ribosomal small subunit assembly"/>
    <property type="evidence" value="ECO:0007669"/>
    <property type="project" value="TreeGrafter"/>
</dbReference>
<dbReference type="GO" id="GO:0006412">
    <property type="term" value="P:translation"/>
    <property type="evidence" value="ECO:0007669"/>
    <property type="project" value="UniProtKB-UniRule"/>
</dbReference>
<dbReference type="FunFam" id="3.30.860.10:FF:000001">
    <property type="entry name" value="30S ribosomal protein S19"/>
    <property type="match status" value="1"/>
</dbReference>
<dbReference type="Gene3D" id="3.30.860.10">
    <property type="entry name" value="30s Ribosomal Protein S19, Chain A"/>
    <property type="match status" value="1"/>
</dbReference>
<dbReference type="HAMAP" id="MF_00531">
    <property type="entry name" value="Ribosomal_uS19"/>
    <property type="match status" value="1"/>
</dbReference>
<dbReference type="InterPro" id="IPR002222">
    <property type="entry name" value="Ribosomal_uS19"/>
</dbReference>
<dbReference type="InterPro" id="IPR005732">
    <property type="entry name" value="Ribosomal_uS19_bac-type"/>
</dbReference>
<dbReference type="InterPro" id="IPR020934">
    <property type="entry name" value="Ribosomal_uS19_CS"/>
</dbReference>
<dbReference type="InterPro" id="IPR023575">
    <property type="entry name" value="Ribosomal_uS19_SF"/>
</dbReference>
<dbReference type="NCBIfam" id="TIGR01050">
    <property type="entry name" value="rpsS_bact"/>
    <property type="match status" value="1"/>
</dbReference>
<dbReference type="PANTHER" id="PTHR11880">
    <property type="entry name" value="RIBOSOMAL PROTEIN S19P FAMILY MEMBER"/>
    <property type="match status" value="1"/>
</dbReference>
<dbReference type="PANTHER" id="PTHR11880:SF8">
    <property type="entry name" value="SMALL RIBOSOMAL SUBUNIT PROTEIN US19M"/>
    <property type="match status" value="1"/>
</dbReference>
<dbReference type="Pfam" id="PF00203">
    <property type="entry name" value="Ribosomal_S19"/>
    <property type="match status" value="1"/>
</dbReference>
<dbReference type="PIRSF" id="PIRSF002144">
    <property type="entry name" value="Ribosomal_S19"/>
    <property type="match status" value="1"/>
</dbReference>
<dbReference type="PRINTS" id="PR00975">
    <property type="entry name" value="RIBOSOMALS19"/>
</dbReference>
<dbReference type="SUPFAM" id="SSF54570">
    <property type="entry name" value="Ribosomal protein S19"/>
    <property type="match status" value="1"/>
</dbReference>
<dbReference type="PROSITE" id="PS00323">
    <property type="entry name" value="RIBOSOMAL_S19"/>
    <property type="match status" value="1"/>
</dbReference>
<name>RS19_BURP6</name>
<accession>A3NEH5</accession>
<keyword id="KW-0687">Ribonucleoprotein</keyword>
<keyword id="KW-0689">Ribosomal protein</keyword>
<keyword id="KW-0694">RNA-binding</keyword>
<keyword id="KW-0699">rRNA-binding</keyword>
<gene>
    <name evidence="1" type="primary">rpsS</name>
    <name type="ordered locus">BURPS668_3742</name>
</gene>
<protein>
    <recommendedName>
        <fullName evidence="1">Small ribosomal subunit protein uS19</fullName>
    </recommendedName>
    <alternativeName>
        <fullName evidence="2">30S ribosomal protein S19</fullName>
    </alternativeName>
</protein>
<proteinExistence type="inferred from homology"/>
<evidence type="ECO:0000255" key="1">
    <source>
        <dbReference type="HAMAP-Rule" id="MF_00531"/>
    </source>
</evidence>
<evidence type="ECO:0000305" key="2"/>
<reference key="1">
    <citation type="journal article" date="2010" name="Genome Biol. Evol.">
        <title>Continuing evolution of Burkholderia mallei through genome reduction and large-scale rearrangements.</title>
        <authorList>
            <person name="Losada L."/>
            <person name="Ronning C.M."/>
            <person name="DeShazer D."/>
            <person name="Woods D."/>
            <person name="Fedorova N."/>
            <person name="Kim H.S."/>
            <person name="Shabalina S.A."/>
            <person name="Pearson T.R."/>
            <person name="Brinkac L."/>
            <person name="Tan P."/>
            <person name="Nandi T."/>
            <person name="Crabtree J."/>
            <person name="Badger J."/>
            <person name="Beckstrom-Sternberg S."/>
            <person name="Saqib M."/>
            <person name="Schutzer S.E."/>
            <person name="Keim P."/>
            <person name="Nierman W.C."/>
        </authorList>
    </citation>
    <scope>NUCLEOTIDE SEQUENCE [LARGE SCALE GENOMIC DNA]</scope>
    <source>
        <strain>668</strain>
    </source>
</reference>